<keyword id="KW-0030">Aminoacyl-tRNA synthetase</keyword>
<keyword id="KW-0067">ATP-binding</keyword>
<keyword id="KW-0963">Cytoplasm</keyword>
<keyword id="KW-0436">Ligase</keyword>
<keyword id="KW-0547">Nucleotide-binding</keyword>
<keyword id="KW-0648">Protein biosynthesis</keyword>
<keyword id="KW-1185">Reference proteome</keyword>
<dbReference type="EC" id="6.1.1.15" evidence="1"/>
<dbReference type="EMBL" id="BA000004">
    <property type="protein sequence ID" value="BAB06138.1"/>
    <property type="molecule type" value="Genomic_DNA"/>
</dbReference>
<dbReference type="PIR" id="C83952">
    <property type="entry name" value="C83952"/>
</dbReference>
<dbReference type="RefSeq" id="WP_010898572.1">
    <property type="nucleotide sequence ID" value="NC_002570.2"/>
</dbReference>
<dbReference type="SMR" id="Q9KA71"/>
<dbReference type="STRING" id="272558.gene:10728317"/>
<dbReference type="KEGG" id="bha:BH2419"/>
<dbReference type="eggNOG" id="COG0442">
    <property type="taxonomic scope" value="Bacteria"/>
</dbReference>
<dbReference type="HOGENOM" id="CLU_016739_0_0_9"/>
<dbReference type="OrthoDB" id="9809052at2"/>
<dbReference type="Proteomes" id="UP000001258">
    <property type="component" value="Chromosome"/>
</dbReference>
<dbReference type="GO" id="GO:0005829">
    <property type="term" value="C:cytosol"/>
    <property type="evidence" value="ECO:0007669"/>
    <property type="project" value="TreeGrafter"/>
</dbReference>
<dbReference type="GO" id="GO:0002161">
    <property type="term" value="F:aminoacyl-tRNA deacylase activity"/>
    <property type="evidence" value="ECO:0007669"/>
    <property type="project" value="InterPro"/>
</dbReference>
<dbReference type="GO" id="GO:0005524">
    <property type="term" value="F:ATP binding"/>
    <property type="evidence" value="ECO:0007669"/>
    <property type="project" value="UniProtKB-UniRule"/>
</dbReference>
<dbReference type="GO" id="GO:0140096">
    <property type="term" value="F:catalytic activity, acting on a protein"/>
    <property type="evidence" value="ECO:0007669"/>
    <property type="project" value="UniProtKB-ARBA"/>
</dbReference>
<dbReference type="GO" id="GO:0004827">
    <property type="term" value="F:proline-tRNA ligase activity"/>
    <property type="evidence" value="ECO:0007669"/>
    <property type="project" value="UniProtKB-UniRule"/>
</dbReference>
<dbReference type="GO" id="GO:0016740">
    <property type="term" value="F:transferase activity"/>
    <property type="evidence" value="ECO:0007669"/>
    <property type="project" value="UniProtKB-ARBA"/>
</dbReference>
<dbReference type="GO" id="GO:0006433">
    <property type="term" value="P:prolyl-tRNA aminoacylation"/>
    <property type="evidence" value="ECO:0007669"/>
    <property type="project" value="UniProtKB-UniRule"/>
</dbReference>
<dbReference type="CDD" id="cd04334">
    <property type="entry name" value="ProRS-INS"/>
    <property type="match status" value="1"/>
</dbReference>
<dbReference type="CDD" id="cd00861">
    <property type="entry name" value="ProRS_anticodon_short"/>
    <property type="match status" value="1"/>
</dbReference>
<dbReference type="CDD" id="cd00779">
    <property type="entry name" value="ProRS_core_prok"/>
    <property type="match status" value="1"/>
</dbReference>
<dbReference type="FunFam" id="3.30.930.10:FF:000043">
    <property type="entry name" value="Proline--tRNA ligase"/>
    <property type="match status" value="1"/>
</dbReference>
<dbReference type="FunFam" id="3.30.930.10:FF:000065">
    <property type="entry name" value="Proline--tRNA ligase"/>
    <property type="match status" value="1"/>
</dbReference>
<dbReference type="FunFam" id="3.40.50.800:FF:000011">
    <property type="entry name" value="Proline--tRNA ligase"/>
    <property type="match status" value="1"/>
</dbReference>
<dbReference type="Gene3D" id="3.40.50.800">
    <property type="entry name" value="Anticodon-binding domain"/>
    <property type="match status" value="1"/>
</dbReference>
<dbReference type="Gene3D" id="3.30.930.10">
    <property type="entry name" value="Bira Bifunctional Protein, Domain 2"/>
    <property type="match status" value="2"/>
</dbReference>
<dbReference type="HAMAP" id="MF_01569">
    <property type="entry name" value="Pro_tRNA_synth_type1"/>
    <property type="match status" value="1"/>
</dbReference>
<dbReference type="InterPro" id="IPR002314">
    <property type="entry name" value="aa-tRNA-synt_IIb"/>
</dbReference>
<dbReference type="InterPro" id="IPR006195">
    <property type="entry name" value="aa-tRNA-synth_II"/>
</dbReference>
<dbReference type="InterPro" id="IPR045864">
    <property type="entry name" value="aa-tRNA-synth_II/BPL/LPL"/>
</dbReference>
<dbReference type="InterPro" id="IPR004154">
    <property type="entry name" value="Anticodon-bd"/>
</dbReference>
<dbReference type="InterPro" id="IPR036621">
    <property type="entry name" value="Anticodon-bd_dom_sf"/>
</dbReference>
<dbReference type="InterPro" id="IPR002316">
    <property type="entry name" value="Pro-tRNA-ligase_IIa"/>
</dbReference>
<dbReference type="InterPro" id="IPR004500">
    <property type="entry name" value="Pro-tRNA-synth_IIa_bac-type"/>
</dbReference>
<dbReference type="InterPro" id="IPR023717">
    <property type="entry name" value="Pro-tRNA-Synthase_IIa_type1"/>
</dbReference>
<dbReference type="InterPro" id="IPR050062">
    <property type="entry name" value="Pro-tRNA_synthetase"/>
</dbReference>
<dbReference type="InterPro" id="IPR044140">
    <property type="entry name" value="ProRS_anticodon_short"/>
</dbReference>
<dbReference type="InterPro" id="IPR033730">
    <property type="entry name" value="ProRS_core_prok"/>
</dbReference>
<dbReference type="InterPro" id="IPR036754">
    <property type="entry name" value="YbaK/aa-tRNA-synt-asso_dom_sf"/>
</dbReference>
<dbReference type="InterPro" id="IPR007214">
    <property type="entry name" value="YbaK/aa-tRNA-synth-assoc-dom"/>
</dbReference>
<dbReference type="NCBIfam" id="NF006625">
    <property type="entry name" value="PRK09194.1"/>
    <property type="match status" value="1"/>
</dbReference>
<dbReference type="NCBIfam" id="TIGR00409">
    <property type="entry name" value="proS_fam_II"/>
    <property type="match status" value="1"/>
</dbReference>
<dbReference type="PANTHER" id="PTHR42753">
    <property type="entry name" value="MITOCHONDRIAL RIBOSOME PROTEIN L39/PROLYL-TRNA LIGASE FAMILY MEMBER"/>
    <property type="match status" value="1"/>
</dbReference>
<dbReference type="PANTHER" id="PTHR42753:SF2">
    <property type="entry name" value="PROLINE--TRNA LIGASE"/>
    <property type="match status" value="1"/>
</dbReference>
<dbReference type="Pfam" id="PF03129">
    <property type="entry name" value="HGTP_anticodon"/>
    <property type="match status" value="1"/>
</dbReference>
<dbReference type="Pfam" id="PF00587">
    <property type="entry name" value="tRNA-synt_2b"/>
    <property type="match status" value="1"/>
</dbReference>
<dbReference type="Pfam" id="PF04073">
    <property type="entry name" value="tRNA_edit"/>
    <property type="match status" value="1"/>
</dbReference>
<dbReference type="PIRSF" id="PIRSF001535">
    <property type="entry name" value="ProRS_1"/>
    <property type="match status" value="1"/>
</dbReference>
<dbReference type="PRINTS" id="PR01046">
    <property type="entry name" value="TRNASYNTHPRO"/>
</dbReference>
<dbReference type="SUPFAM" id="SSF52954">
    <property type="entry name" value="Class II aaRS ABD-related"/>
    <property type="match status" value="1"/>
</dbReference>
<dbReference type="SUPFAM" id="SSF55681">
    <property type="entry name" value="Class II aaRS and biotin synthetases"/>
    <property type="match status" value="1"/>
</dbReference>
<dbReference type="SUPFAM" id="SSF55826">
    <property type="entry name" value="YbaK/ProRS associated domain"/>
    <property type="match status" value="1"/>
</dbReference>
<dbReference type="PROSITE" id="PS50862">
    <property type="entry name" value="AA_TRNA_LIGASE_II"/>
    <property type="match status" value="1"/>
</dbReference>
<gene>
    <name evidence="1" type="primary">proS</name>
    <name type="ordered locus">BH2419</name>
</gene>
<feature type="chain" id="PRO_0000248647" description="Proline--tRNA ligase">
    <location>
        <begin position="1"/>
        <end position="569"/>
    </location>
</feature>
<organism>
    <name type="scientific">Halalkalibacterium halodurans (strain ATCC BAA-125 / DSM 18197 / FERM 7344 / JCM 9153 / C-125)</name>
    <name type="common">Bacillus halodurans</name>
    <dbReference type="NCBI Taxonomy" id="272558"/>
    <lineage>
        <taxon>Bacteria</taxon>
        <taxon>Bacillati</taxon>
        <taxon>Bacillota</taxon>
        <taxon>Bacilli</taxon>
        <taxon>Bacillales</taxon>
        <taxon>Bacillaceae</taxon>
        <taxon>Halalkalibacterium (ex Joshi et al. 2022)</taxon>
    </lineage>
</organism>
<protein>
    <recommendedName>
        <fullName evidence="1">Proline--tRNA ligase</fullName>
        <ecNumber evidence="1">6.1.1.15</ecNumber>
    </recommendedName>
    <alternativeName>
        <fullName evidence="1">Prolyl-tRNA synthetase</fullName>
        <shortName evidence="1">ProRS</shortName>
    </alternativeName>
</protein>
<comment type="function">
    <text evidence="1">Catalyzes the attachment of proline to tRNA(Pro) in a two-step reaction: proline is first activated by ATP to form Pro-AMP and then transferred to the acceptor end of tRNA(Pro). As ProRS can inadvertently accommodate and process non-cognate amino acids such as alanine and cysteine, to avoid such errors it has two additional distinct editing activities against alanine. One activity is designated as 'pretransfer' editing and involves the tRNA(Pro)-independent hydrolysis of activated Ala-AMP. The other activity is designated 'posttransfer' editing and involves deacylation of mischarged Ala-tRNA(Pro). The misacylated Cys-tRNA(Pro) is not edited by ProRS.</text>
</comment>
<comment type="catalytic activity">
    <reaction evidence="1">
        <text>tRNA(Pro) + L-proline + ATP = L-prolyl-tRNA(Pro) + AMP + diphosphate</text>
        <dbReference type="Rhea" id="RHEA:14305"/>
        <dbReference type="Rhea" id="RHEA-COMP:9700"/>
        <dbReference type="Rhea" id="RHEA-COMP:9702"/>
        <dbReference type="ChEBI" id="CHEBI:30616"/>
        <dbReference type="ChEBI" id="CHEBI:33019"/>
        <dbReference type="ChEBI" id="CHEBI:60039"/>
        <dbReference type="ChEBI" id="CHEBI:78442"/>
        <dbReference type="ChEBI" id="CHEBI:78532"/>
        <dbReference type="ChEBI" id="CHEBI:456215"/>
        <dbReference type="EC" id="6.1.1.15"/>
    </reaction>
</comment>
<comment type="subunit">
    <text evidence="1">Homodimer.</text>
</comment>
<comment type="subcellular location">
    <subcellularLocation>
        <location evidence="1">Cytoplasm</location>
    </subcellularLocation>
</comment>
<comment type="domain">
    <text evidence="1">Consists of three domains: the N-terminal catalytic domain, the editing domain and the C-terminal anticodon-binding domain.</text>
</comment>
<comment type="similarity">
    <text evidence="1">Belongs to the class-II aminoacyl-tRNA synthetase family. ProS type 1 subfamily.</text>
</comment>
<sequence>MKQSFFLVPTMREVPADADVVSHQLMLRAGMIRQVAAGIYTYLPLARRVIRKIESIVREELDQTGAQEITMPTLHPAELWQESGRWEKYGDELMRLTDRHNRQFALGPTHEEVITSLIRDSINSYKKLPLNVYQIQSKFRDERRPRFGLLRGREFIMKDAYSFHTGGESLDEMYKVMYDAYSRIFRRAGLNVRPVIADSGAIGGKDTHEFMALADVGEDTIAYSDQSDYAANIEMAAVKVNYTRPDEPLLERELVDTGDAKTIRAVAERLSVQEEKIIKSLLVSIDDEWALILLRGDHELNDIKLKHALGASDIRLATEEEVLEVIGTEVGTIGPVDVKGVKVIADHGIKSIVNGVCGANESNKHFIHVNEERDFTVDTYADLRFIQEGDPSPDGKGTIRFAQGIEVGQVFKLGTVYSEKLGATFLDENGKSQPMLMGCYGIGVSRMVAAVIEQHHDEDGIVWPTSVAPFDVHVLALNVKKEEQMKLADSVYHSLQQAGLDVLLDDRPERAGVKFKDADLIGLPLRVAVGKRADEGYVEVKVRKTGEVIEVHADELVPTIQAKLQQLAE</sequence>
<name>SYP_HALH5</name>
<evidence type="ECO:0000255" key="1">
    <source>
        <dbReference type="HAMAP-Rule" id="MF_01569"/>
    </source>
</evidence>
<proteinExistence type="inferred from homology"/>
<accession>Q9KA71</accession>
<reference key="1">
    <citation type="journal article" date="2000" name="Nucleic Acids Res.">
        <title>Complete genome sequence of the alkaliphilic bacterium Bacillus halodurans and genomic sequence comparison with Bacillus subtilis.</title>
        <authorList>
            <person name="Takami H."/>
            <person name="Nakasone K."/>
            <person name="Takaki Y."/>
            <person name="Maeno G."/>
            <person name="Sasaki R."/>
            <person name="Masui N."/>
            <person name="Fuji F."/>
            <person name="Hirama C."/>
            <person name="Nakamura Y."/>
            <person name="Ogasawara N."/>
            <person name="Kuhara S."/>
            <person name="Horikoshi K."/>
        </authorList>
    </citation>
    <scope>NUCLEOTIDE SEQUENCE [LARGE SCALE GENOMIC DNA]</scope>
    <source>
        <strain>ATCC BAA-125 / DSM 18197 / FERM 7344 / JCM 9153 / C-125</strain>
    </source>
</reference>